<organism>
    <name type="scientific">Staphylococcus haemolyticus (strain JCSC1435)</name>
    <dbReference type="NCBI Taxonomy" id="279808"/>
    <lineage>
        <taxon>Bacteria</taxon>
        <taxon>Bacillati</taxon>
        <taxon>Bacillota</taxon>
        <taxon>Bacilli</taxon>
        <taxon>Bacillales</taxon>
        <taxon>Staphylococcaceae</taxon>
        <taxon>Staphylococcus</taxon>
    </lineage>
</organism>
<feature type="chain" id="PRO_0000138230" description="CTP synthase">
    <location>
        <begin position="1"/>
        <end position="535"/>
    </location>
</feature>
<feature type="domain" description="Glutamine amidotransferase type-1" evidence="1">
    <location>
        <begin position="293"/>
        <end position="535"/>
    </location>
</feature>
<feature type="region of interest" description="Amidoligase domain" evidence="1">
    <location>
        <begin position="1"/>
        <end position="267"/>
    </location>
</feature>
<feature type="active site" description="Nucleophile; for glutamine hydrolysis" evidence="1">
    <location>
        <position position="382"/>
    </location>
</feature>
<feature type="active site" evidence="1">
    <location>
        <position position="508"/>
    </location>
</feature>
<feature type="active site" evidence="1">
    <location>
        <position position="510"/>
    </location>
</feature>
<feature type="binding site" evidence="1">
    <location>
        <position position="13"/>
    </location>
    <ligand>
        <name>CTP</name>
        <dbReference type="ChEBI" id="CHEBI:37563"/>
        <note>allosteric inhibitor</note>
    </ligand>
</feature>
<feature type="binding site" evidence="1">
    <location>
        <position position="13"/>
    </location>
    <ligand>
        <name>UTP</name>
        <dbReference type="ChEBI" id="CHEBI:46398"/>
    </ligand>
</feature>
<feature type="binding site" evidence="1">
    <location>
        <begin position="14"/>
        <end position="19"/>
    </location>
    <ligand>
        <name>ATP</name>
        <dbReference type="ChEBI" id="CHEBI:30616"/>
    </ligand>
</feature>
<feature type="binding site" evidence="1">
    <location>
        <position position="54"/>
    </location>
    <ligand>
        <name>L-glutamine</name>
        <dbReference type="ChEBI" id="CHEBI:58359"/>
    </ligand>
</feature>
<feature type="binding site" evidence="1">
    <location>
        <position position="71"/>
    </location>
    <ligand>
        <name>ATP</name>
        <dbReference type="ChEBI" id="CHEBI:30616"/>
    </ligand>
</feature>
<feature type="binding site" evidence="1">
    <location>
        <position position="71"/>
    </location>
    <ligand>
        <name>Mg(2+)</name>
        <dbReference type="ChEBI" id="CHEBI:18420"/>
    </ligand>
</feature>
<feature type="binding site" evidence="1">
    <location>
        <position position="141"/>
    </location>
    <ligand>
        <name>Mg(2+)</name>
        <dbReference type="ChEBI" id="CHEBI:18420"/>
    </ligand>
</feature>
<feature type="binding site" evidence="1">
    <location>
        <begin position="148"/>
        <end position="150"/>
    </location>
    <ligand>
        <name>CTP</name>
        <dbReference type="ChEBI" id="CHEBI:37563"/>
        <note>allosteric inhibitor</note>
    </ligand>
</feature>
<feature type="binding site" evidence="1">
    <location>
        <begin position="188"/>
        <end position="193"/>
    </location>
    <ligand>
        <name>CTP</name>
        <dbReference type="ChEBI" id="CHEBI:37563"/>
        <note>allosteric inhibitor</note>
    </ligand>
</feature>
<feature type="binding site" evidence="1">
    <location>
        <begin position="188"/>
        <end position="193"/>
    </location>
    <ligand>
        <name>UTP</name>
        <dbReference type="ChEBI" id="CHEBI:46398"/>
    </ligand>
</feature>
<feature type="binding site" evidence="1">
    <location>
        <position position="224"/>
    </location>
    <ligand>
        <name>CTP</name>
        <dbReference type="ChEBI" id="CHEBI:37563"/>
        <note>allosteric inhibitor</note>
    </ligand>
</feature>
<feature type="binding site" evidence="1">
    <location>
        <position position="224"/>
    </location>
    <ligand>
        <name>UTP</name>
        <dbReference type="ChEBI" id="CHEBI:46398"/>
    </ligand>
</feature>
<feature type="binding site" evidence="1">
    <location>
        <begin position="240"/>
        <end position="242"/>
    </location>
    <ligand>
        <name>ATP</name>
        <dbReference type="ChEBI" id="CHEBI:30616"/>
    </ligand>
</feature>
<feature type="binding site" evidence="1">
    <location>
        <position position="355"/>
    </location>
    <ligand>
        <name>L-glutamine</name>
        <dbReference type="ChEBI" id="CHEBI:58359"/>
    </ligand>
</feature>
<feature type="binding site" evidence="1">
    <location>
        <begin position="383"/>
        <end position="386"/>
    </location>
    <ligand>
        <name>L-glutamine</name>
        <dbReference type="ChEBI" id="CHEBI:58359"/>
    </ligand>
</feature>
<feature type="binding site" evidence="1">
    <location>
        <position position="406"/>
    </location>
    <ligand>
        <name>L-glutamine</name>
        <dbReference type="ChEBI" id="CHEBI:58359"/>
    </ligand>
</feature>
<feature type="binding site" evidence="1">
    <location>
        <position position="463"/>
    </location>
    <ligand>
        <name>L-glutamine</name>
        <dbReference type="ChEBI" id="CHEBI:58359"/>
    </ligand>
</feature>
<dbReference type="EC" id="6.3.4.2" evidence="1"/>
<dbReference type="EMBL" id="AP006716">
    <property type="protein sequence ID" value="BAE04217.1"/>
    <property type="molecule type" value="Genomic_DNA"/>
</dbReference>
<dbReference type="RefSeq" id="WP_011275219.1">
    <property type="nucleotide sequence ID" value="NC_007168.1"/>
</dbReference>
<dbReference type="SMR" id="Q4L808"/>
<dbReference type="KEGG" id="sha:SH0908"/>
<dbReference type="eggNOG" id="COG0504">
    <property type="taxonomic scope" value="Bacteria"/>
</dbReference>
<dbReference type="HOGENOM" id="CLU_011675_5_0_9"/>
<dbReference type="OrthoDB" id="9801107at2"/>
<dbReference type="UniPathway" id="UPA00159">
    <property type="reaction ID" value="UER00277"/>
</dbReference>
<dbReference type="Proteomes" id="UP000000543">
    <property type="component" value="Chromosome"/>
</dbReference>
<dbReference type="GO" id="GO:0005829">
    <property type="term" value="C:cytosol"/>
    <property type="evidence" value="ECO:0007669"/>
    <property type="project" value="TreeGrafter"/>
</dbReference>
<dbReference type="GO" id="GO:0005524">
    <property type="term" value="F:ATP binding"/>
    <property type="evidence" value="ECO:0007669"/>
    <property type="project" value="UniProtKB-KW"/>
</dbReference>
<dbReference type="GO" id="GO:0003883">
    <property type="term" value="F:CTP synthase activity"/>
    <property type="evidence" value="ECO:0007669"/>
    <property type="project" value="UniProtKB-UniRule"/>
</dbReference>
<dbReference type="GO" id="GO:0004359">
    <property type="term" value="F:glutaminase activity"/>
    <property type="evidence" value="ECO:0007669"/>
    <property type="project" value="RHEA"/>
</dbReference>
<dbReference type="GO" id="GO:0042802">
    <property type="term" value="F:identical protein binding"/>
    <property type="evidence" value="ECO:0007669"/>
    <property type="project" value="TreeGrafter"/>
</dbReference>
<dbReference type="GO" id="GO:0046872">
    <property type="term" value="F:metal ion binding"/>
    <property type="evidence" value="ECO:0007669"/>
    <property type="project" value="UniProtKB-KW"/>
</dbReference>
<dbReference type="GO" id="GO:0044210">
    <property type="term" value="P:'de novo' CTP biosynthetic process"/>
    <property type="evidence" value="ECO:0007669"/>
    <property type="project" value="UniProtKB-UniRule"/>
</dbReference>
<dbReference type="GO" id="GO:0019856">
    <property type="term" value="P:pyrimidine nucleobase biosynthetic process"/>
    <property type="evidence" value="ECO:0007669"/>
    <property type="project" value="TreeGrafter"/>
</dbReference>
<dbReference type="CDD" id="cd03113">
    <property type="entry name" value="CTPS_N"/>
    <property type="match status" value="1"/>
</dbReference>
<dbReference type="CDD" id="cd01746">
    <property type="entry name" value="GATase1_CTP_Synthase"/>
    <property type="match status" value="1"/>
</dbReference>
<dbReference type="FunFam" id="3.40.50.300:FF:000009">
    <property type="entry name" value="CTP synthase"/>
    <property type="match status" value="1"/>
</dbReference>
<dbReference type="FunFam" id="3.40.50.880:FF:000002">
    <property type="entry name" value="CTP synthase"/>
    <property type="match status" value="1"/>
</dbReference>
<dbReference type="Gene3D" id="3.40.50.880">
    <property type="match status" value="1"/>
</dbReference>
<dbReference type="Gene3D" id="3.40.50.300">
    <property type="entry name" value="P-loop containing nucleotide triphosphate hydrolases"/>
    <property type="match status" value="1"/>
</dbReference>
<dbReference type="HAMAP" id="MF_01227">
    <property type="entry name" value="PyrG"/>
    <property type="match status" value="1"/>
</dbReference>
<dbReference type="InterPro" id="IPR029062">
    <property type="entry name" value="Class_I_gatase-like"/>
</dbReference>
<dbReference type="InterPro" id="IPR004468">
    <property type="entry name" value="CTP_synthase"/>
</dbReference>
<dbReference type="InterPro" id="IPR017456">
    <property type="entry name" value="CTP_synthase_N"/>
</dbReference>
<dbReference type="InterPro" id="IPR017926">
    <property type="entry name" value="GATASE"/>
</dbReference>
<dbReference type="InterPro" id="IPR033828">
    <property type="entry name" value="GATase1_CTP_Synthase"/>
</dbReference>
<dbReference type="InterPro" id="IPR027417">
    <property type="entry name" value="P-loop_NTPase"/>
</dbReference>
<dbReference type="NCBIfam" id="NF003792">
    <property type="entry name" value="PRK05380.1"/>
    <property type="match status" value="1"/>
</dbReference>
<dbReference type="NCBIfam" id="TIGR00337">
    <property type="entry name" value="PyrG"/>
    <property type="match status" value="1"/>
</dbReference>
<dbReference type="PANTHER" id="PTHR11550">
    <property type="entry name" value="CTP SYNTHASE"/>
    <property type="match status" value="1"/>
</dbReference>
<dbReference type="PANTHER" id="PTHR11550:SF0">
    <property type="entry name" value="CTP SYNTHASE-RELATED"/>
    <property type="match status" value="1"/>
</dbReference>
<dbReference type="Pfam" id="PF06418">
    <property type="entry name" value="CTP_synth_N"/>
    <property type="match status" value="1"/>
</dbReference>
<dbReference type="Pfam" id="PF00117">
    <property type="entry name" value="GATase"/>
    <property type="match status" value="1"/>
</dbReference>
<dbReference type="SUPFAM" id="SSF52317">
    <property type="entry name" value="Class I glutamine amidotransferase-like"/>
    <property type="match status" value="1"/>
</dbReference>
<dbReference type="SUPFAM" id="SSF52540">
    <property type="entry name" value="P-loop containing nucleoside triphosphate hydrolases"/>
    <property type="match status" value="1"/>
</dbReference>
<dbReference type="PROSITE" id="PS51273">
    <property type="entry name" value="GATASE_TYPE_1"/>
    <property type="match status" value="1"/>
</dbReference>
<reference key="1">
    <citation type="journal article" date="2005" name="J. Bacteriol.">
        <title>Whole-genome sequencing of Staphylococcus haemolyticus uncovers the extreme plasticity of its genome and the evolution of human-colonizing staphylococcal species.</title>
        <authorList>
            <person name="Takeuchi F."/>
            <person name="Watanabe S."/>
            <person name="Baba T."/>
            <person name="Yuzawa H."/>
            <person name="Ito T."/>
            <person name="Morimoto Y."/>
            <person name="Kuroda M."/>
            <person name="Cui L."/>
            <person name="Takahashi M."/>
            <person name="Ankai A."/>
            <person name="Baba S."/>
            <person name="Fukui S."/>
            <person name="Lee J.C."/>
            <person name="Hiramatsu K."/>
        </authorList>
    </citation>
    <scope>NUCLEOTIDE SEQUENCE [LARGE SCALE GENOMIC DNA]</scope>
    <source>
        <strain>JCSC1435</strain>
    </source>
</reference>
<evidence type="ECO:0000255" key="1">
    <source>
        <dbReference type="HAMAP-Rule" id="MF_01227"/>
    </source>
</evidence>
<protein>
    <recommendedName>
        <fullName evidence="1">CTP synthase</fullName>
        <ecNumber evidence="1">6.3.4.2</ecNumber>
    </recommendedName>
    <alternativeName>
        <fullName evidence="1">Cytidine 5'-triphosphate synthase</fullName>
    </alternativeName>
    <alternativeName>
        <fullName evidence="1">Cytidine triphosphate synthetase</fullName>
        <shortName evidence="1">CTP synthetase</shortName>
        <shortName evidence="1">CTPS</shortName>
    </alternativeName>
    <alternativeName>
        <fullName evidence="1">UTP--ammonia ligase</fullName>
    </alternativeName>
</protein>
<sequence>MTKFIFVTGGVVSSLGKGITAASLGRLLKDRGLKVTIQKFDPYLNVDPGTMSPYQHGEVFVTDDGAETDLDLGHYERFIDINLNKYSNVTAGKVYSHVLKKERRGDYLGGTVQVIPHITNEIKERLLLAGESTNADVVITEIGGTTGDIESLPFIEAIRQIRSDLGRENVMYVHCTLLPYIKAAGEMKTKPTQHSVKELRGLGIQPDLIVVRTEYEMTQDLKDKIALFCDINKESVIECRDASSLYEIPLQLSAQDMDDIVIKRLDLDAKYETQLDEWQYLLDTVNSLDGTITIGLVGKYVSLQDAYLSVVESLKHAGYPLKKDVVVKWIDSGEVNDNNVEDYLKDVDGILVPGGFGFRASEGKIAAIKYARENNVPYFGICLGMQLATVEFARNVLGLEGAHSAELNPSTPYPIIDLLPEQKDIEDLGGTLRLGLYPCKIKENTLAHQIYDAVNIEERHRHRYEFNNEFREQLEANGMVFSGTSPDGRLVEMVEIPENDFYIACQFHPEFLSRPNRPQPIFKSFVEAAYKHQNK</sequence>
<name>PYRG_STAHJ</name>
<accession>Q4L808</accession>
<gene>
    <name evidence="1" type="primary">pyrG</name>
    <name type="ordered locus">SH0908</name>
</gene>
<comment type="function">
    <text evidence="1">Catalyzes the ATP-dependent amination of UTP to CTP with either L-glutamine or ammonia as the source of nitrogen. Regulates intracellular CTP levels through interactions with the four ribonucleotide triphosphates.</text>
</comment>
<comment type="catalytic activity">
    <reaction evidence="1">
        <text>UTP + L-glutamine + ATP + H2O = CTP + L-glutamate + ADP + phosphate + 2 H(+)</text>
        <dbReference type="Rhea" id="RHEA:26426"/>
        <dbReference type="ChEBI" id="CHEBI:15377"/>
        <dbReference type="ChEBI" id="CHEBI:15378"/>
        <dbReference type="ChEBI" id="CHEBI:29985"/>
        <dbReference type="ChEBI" id="CHEBI:30616"/>
        <dbReference type="ChEBI" id="CHEBI:37563"/>
        <dbReference type="ChEBI" id="CHEBI:43474"/>
        <dbReference type="ChEBI" id="CHEBI:46398"/>
        <dbReference type="ChEBI" id="CHEBI:58359"/>
        <dbReference type="ChEBI" id="CHEBI:456216"/>
        <dbReference type="EC" id="6.3.4.2"/>
    </reaction>
</comment>
<comment type="catalytic activity">
    <reaction evidence="1">
        <text>L-glutamine + H2O = L-glutamate + NH4(+)</text>
        <dbReference type="Rhea" id="RHEA:15889"/>
        <dbReference type="ChEBI" id="CHEBI:15377"/>
        <dbReference type="ChEBI" id="CHEBI:28938"/>
        <dbReference type="ChEBI" id="CHEBI:29985"/>
        <dbReference type="ChEBI" id="CHEBI:58359"/>
    </reaction>
</comment>
<comment type="catalytic activity">
    <reaction evidence="1">
        <text>UTP + NH4(+) + ATP = CTP + ADP + phosphate + 2 H(+)</text>
        <dbReference type="Rhea" id="RHEA:16597"/>
        <dbReference type="ChEBI" id="CHEBI:15378"/>
        <dbReference type="ChEBI" id="CHEBI:28938"/>
        <dbReference type="ChEBI" id="CHEBI:30616"/>
        <dbReference type="ChEBI" id="CHEBI:37563"/>
        <dbReference type="ChEBI" id="CHEBI:43474"/>
        <dbReference type="ChEBI" id="CHEBI:46398"/>
        <dbReference type="ChEBI" id="CHEBI:456216"/>
    </reaction>
</comment>
<comment type="activity regulation">
    <text evidence="1">Allosterically activated by GTP, when glutamine is the substrate; GTP has no effect on the reaction when ammonia is the substrate. The allosteric effector GTP functions by stabilizing the protein conformation that binds the tetrahedral intermediate(s) formed during glutamine hydrolysis. Inhibited by the product CTP, via allosteric rather than competitive inhibition.</text>
</comment>
<comment type="pathway">
    <text evidence="1">Pyrimidine metabolism; CTP biosynthesis via de novo pathway; CTP from UDP: step 2/2.</text>
</comment>
<comment type="subunit">
    <text evidence="1">Homotetramer.</text>
</comment>
<comment type="miscellaneous">
    <text evidence="1">CTPSs have evolved a hybrid strategy for distinguishing between UTP and CTP. The overlapping regions of the product feedback inhibitory and substrate sites recognize a common feature in both compounds, the triphosphate moiety. To differentiate isosteric substrate and product pyrimidine rings, an additional pocket far from the expected kinase/ligase catalytic site, specifically recognizes the cytosine and ribose portions of the product inhibitor.</text>
</comment>
<comment type="similarity">
    <text evidence="1">Belongs to the CTP synthase family.</text>
</comment>
<proteinExistence type="inferred from homology"/>
<keyword id="KW-0067">ATP-binding</keyword>
<keyword id="KW-0315">Glutamine amidotransferase</keyword>
<keyword id="KW-0436">Ligase</keyword>
<keyword id="KW-0460">Magnesium</keyword>
<keyword id="KW-0479">Metal-binding</keyword>
<keyword id="KW-0547">Nucleotide-binding</keyword>
<keyword id="KW-0665">Pyrimidine biosynthesis</keyword>